<gene>
    <name type="primary">hdrD</name>
    <name type="ordered locus">MM_1844</name>
</gene>
<evidence type="ECO:0000250" key="1">
    <source>
        <dbReference type="UniProtKB" id="P96797"/>
    </source>
</evidence>
<evidence type="ECO:0000255" key="2">
    <source>
        <dbReference type="PROSITE-ProRule" id="PRU00711"/>
    </source>
</evidence>
<evidence type="ECO:0000269" key="3">
    <source>
    </source>
</evidence>
<evidence type="ECO:0000305" key="4"/>
<evidence type="ECO:0000305" key="5">
    <source>
    </source>
</evidence>
<dbReference type="EC" id="1.8.98.1" evidence="3"/>
<dbReference type="EMBL" id="AE008384">
    <property type="protein sequence ID" value="AAM31540.1"/>
    <property type="status" value="ALT_INIT"/>
    <property type="molecule type" value="Genomic_DNA"/>
</dbReference>
<dbReference type="RefSeq" id="WP_048045886.1">
    <property type="nucleotide sequence ID" value="NC_003901.1"/>
</dbReference>
<dbReference type="SMR" id="Q8PVW3"/>
<dbReference type="TCDB" id="3.D.7.1.7">
    <property type="family name" value="the h2:heterodisulfide oxidoreductase (hho) family"/>
</dbReference>
<dbReference type="GeneID" id="82160897"/>
<dbReference type="KEGG" id="mma:MM_1844"/>
<dbReference type="PATRIC" id="fig|192952.21.peg.2129"/>
<dbReference type="eggNOG" id="arCOG00333">
    <property type="taxonomic scope" value="Archaea"/>
</dbReference>
<dbReference type="HOGENOM" id="CLU_023081_2_0_2"/>
<dbReference type="UniPathway" id="UPA00647">
    <property type="reaction ID" value="UER00700"/>
</dbReference>
<dbReference type="Proteomes" id="UP000000595">
    <property type="component" value="Chromosome"/>
</dbReference>
<dbReference type="GO" id="GO:0005886">
    <property type="term" value="C:plasma membrane"/>
    <property type="evidence" value="ECO:0007669"/>
    <property type="project" value="UniProtKB-SubCell"/>
</dbReference>
<dbReference type="GO" id="GO:0051539">
    <property type="term" value="F:4 iron, 4 sulfur cluster binding"/>
    <property type="evidence" value="ECO:0007669"/>
    <property type="project" value="UniProtKB-KW"/>
</dbReference>
<dbReference type="GO" id="GO:0051912">
    <property type="term" value="F:CoB--CoM heterodisulfide reductase activity"/>
    <property type="evidence" value="ECO:0007669"/>
    <property type="project" value="UniProtKB-EC"/>
</dbReference>
<dbReference type="GO" id="GO:0046872">
    <property type="term" value="F:metal ion binding"/>
    <property type="evidence" value="ECO:0007669"/>
    <property type="project" value="UniProtKB-KW"/>
</dbReference>
<dbReference type="GO" id="GO:0015948">
    <property type="term" value="P:methanogenesis"/>
    <property type="evidence" value="ECO:0007669"/>
    <property type="project" value="UniProtKB-KW"/>
</dbReference>
<dbReference type="Gene3D" id="1.10.1060.10">
    <property type="entry name" value="Alpha-helical ferredoxin"/>
    <property type="match status" value="1"/>
</dbReference>
<dbReference type="InterPro" id="IPR017896">
    <property type="entry name" value="4Fe4S_Fe-S-bd"/>
</dbReference>
<dbReference type="InterPro" id="IPR017900">
    <property type="entry name" value="4Fe4S_Fe_S_CS"/>
</dbReference>
<dbReference type="InterPro" id="IPR004017">
    <property type="entry name" value="Cys_rich_dom"/>
</dbReference>
<dbReference type="InterPro" id="IPR051278">
    <property type="entry name" value="HdrB/HdrD_reductase"/>
</dbReference>
<dbReference type="InterPro" id="IPR009051">
    <property type="entry name" value="Helical_ferredxn"/>
</dbReference>
<dbReference type="PANTHER" id="PTHR42947">
    <property type="entry name" value="COB--COM HETERODISULFIDE REDUCTASE SUBUNIT B 1"/>
    <property type="match status" value="1"/>
</dbReference>
<dbReference type="PANTHER" id="PTHR42947:SF1">
    <property type="entry name" value="COB--COM HETERODISULFIDE REDUCTASE SUBUNIT B 1"/>
    <property type="match status" value="1"/>
</dbReference>
<dbReference type="Pfam" id="PF02754">
    <property type="entry name" value="CCG"/>
    <property type="match status" value="2"/>
</dbReference>
<dbReference type="Pfam" id="PF13183">
    <property type="entry name" value="Fer4_8"/>
    <property type="match status" value="1"/>
</dbReference>
<dbReference type="SUPFAM" id="SSF46548">
    <property type="entry name" value="alpha-helical ferredoxin"/>
    <property type="match status" value="1"/>
</dbReference>
<dbReference type="PROSITE" id="PS00198">
    <property type="entry name" value="4FE4S_FER_1"/>
    <property type="match status" value="2"/>
</dbReference>
<dbReference type="PROSITE" id="PS51379">
    <property type="entry name" value="4FE4S_FER_2"/>
    <property type="match status" value="2"/>
</dbReference>
<accession>Q8PVW3</accession>
<comment type="function">
    <text evidence="3">Part of a complex that catalyzes the reversible reduction of CoM-S-S-CoB to the thiol-coenzymes H-S-CoM (coenzyme M) and H-S-CoB (coenzyme B).</text>
</comment>
<comment type="catalytic activity">
    <reaction evidence="3">
        <text>methanophenazine + coenzyme B + coenzyme M = dihydromethanophenazine + coenzyme M-coenzyme B heterodisulfide</text>
        <dbReference type="Rhea" id="RHEA:18085"/>
        <dbReference type="ChEBI" id="CHEBI:29118"/>
        <dbReference type="ChEBI" id="CHEBI:50375"/>
        <dbReference type="ChEBI" id="CHEBI:58319"/>
        <dbReference type="ChEBI" id="CHEBI:58411"/>
        <dbReference type="ChEBI" id="CHEBI:58596"/>
        <dbReference type="EC" id="1.8.98.1"/>
    </reaction>
</comment>
<comment type="cofactor">
    <cofactor evidence="2">
        <name>[4Fe-4S] cluster</name>
        <dbReference type="ChEBI" id="CHEBI:49883"/>
    </cofactor>
    <text evidence="2">Binds 2 [4Fe-4S] clusters per subunit.</text>
</comment>
<comment type="pathway">
    <text evidence="4">Cofactor metabolism; coenzyme M-coenzyme B heterodisulfide reduction; coenzyme B and coenzyme M from coenzyme M-coenzyme B heterodisulfide: step 1/1.</text>
</comment>
<comment type="subunit">
    <text evidence="1">The dihydromethanophenazine:CoB--CoM heterodisulfide reductase is composed of two subunits; HdrD and HdrE.</text>
</comment>
<comment type="subcellular location">
    <subcellularLocation>
        <location evidence="3">Cell membrane</location>
    </subcellularLocation>
    <text evidence="3">Membrane-bound.</text>
</comment>
<comment type="miscellaneous">
    <text evidence="5">Methanophenazine seems to mediate electron transfer from F(420)H(2) dehydrogenase to the dihydromethanophenazine:CoB--CoM heterodisulfide reductase.</text>
</comment>
<comment type="similarity">
    <text evidence="4">Belongs to the HdrD family.</text>
</comment>
<comment type="sequence caution" evidence="4">
    <conflict type="erroneous initiation">
        <sequence resource="EMBL-CDS" id="AAM31540"/>
    </conflict>
</comment>
<protein>
    <recommendedName>
        <fullName evidence="4">Dihydromethanophenazine:CoB--CoM heterodisulfide reductase subunit D</fullName>
        <ecNumber evidence="3">1.8.98.1</ecNumber>
    </recommendedName>
    <alternativeName>
        <fullName evidence="4">CoB--CoM heterodisulfide reductase iron-sulfur subunit D</fullName>
    </alternativeName>
    <alternativeName>
        <fullName evidence="4">Coenzyme B:coenzyme M:methanophenazine oxidoreductase subunit D</fullName>
    </alternativeName>
</protein>
<reference key="1">
    <citation type="journal article" date="2002" name="J. Mol. Microbiol. Biotechnol.">
        <title>The genome of Methanosarcina mazei: evidence for lateral gene transfer between Bacteria and Archaea.</title>
        <authorList>
            <person name="Deppenmeier U."/>
            <person name="Johann A."/>
            <person name="Hartsch T."/>
            <person name="Merkl R."/>
            <person name="Schmitz R.A."/>
            <person name="Martinez-Arias R."/>
            <person name="Henne A."/>
            <person name="Wiezer A."/>
            <person name="Baeumer S."/>
            <person name="Jacobi C."/>
            <person name="Brueggemann H."/>
            <person name="Lienard T."/>
            <person name="Christmann A."/>
            <person name="Boemecke M."/>
            <person name="Steckel S."/>
            <person name="Bhattacharyya A."/>
            <person name="Lykidis A."/>
            <person name="Overbeek R."/>
            <person name="Klenk H.-P."/>
            <person name="Gunsalus R.P."/>
            <person name="Fritz H.-J."/>
            <person name="Gottschalk G."/>
        </authorList>
    </citation>
    <scope>NUCLEOTIDE SEQUENCE [LARGE SCALE GENOMIC DNA]</scope>
    <source>
        <strain>ATCC BAA-159 / DSM 3647 / Goe1 / Go1 / JCM 11833 / OCM 88</strain>
    </source>
</reference>
<reference key="2">
    <citation type="journal article" date="1998" name="J. Bacteriol.">
        <title>Isolation and characterization of methanophenazine and function of phenazines in membrane-bound electron transport of Methanosarcina mazei Goe1.</title>
        <authorList>
            <person name="Abken H.J."/>
            <person name="Tietze M."/>
            <person name="Brodersen J."/>
            <person name="Baeumer S."/>
            <person name="Beifuss U."/>
            <person name="Deppenmeier U."/>
        </authorList>
    </citation>
    <scope>FUNCTION</scope>
    <scope>CATALYTIC ACTIVITY</scope>
    <scope>SUBCELLULAR LOCATION</scope>
    <source>
        <strain>ATCC BAA-159 / DSM 3647 / Goe1 / Go1 / JCM 11833 / OCM 88</strain>
    </source>
</reference>
<keyword id="KW-0004">4Fe-4S</keyword>
<keyword id="KW-1003">Cell membrane</keyword>
<keyword id="KW-0408">Iron</keyword>
<keyword id="KW-0411">Iron-sulfur</keyword>
<keyword id="KW-0472">Membrane</keyword>
<keyword id="KW-0479">Metal-binding</keyword>
<keyword id="KW-0484">Methanogenesis</keyword>
<keyword id="KW-0560">Oxidoreductase</keyword>
<keyword id="KW-0677">Repeat</keyword>
<sequence length="409" mass="45377">MAKKTPSIDTKNLTAVQLMELDSCTRCGECVKWCPTYAASGQKPGLAPRDKILRWRQFMNKSYGIKAKLFGPTEIPQSELEEFKDDVHGCTTCGICATVCESGINTVELWEALRTNLVKKGIGPFGKQNMFPKLIGQYHNPYMKDQKDRLNWVPPDVKIEDKADVVYFTGCTAGYNQLALAFATARVLNKLGVKFSMLGEEEWCCGSALIRTGQVHVDDVPRELARHNVEALKKKGAKKVLYACAGCFRASKVDWPRLLGEELPFEVVHVAEFLADLIKQDKIKWEKSINKTVTYHDPCHLGRHVGVFDAPRYVLSHIPGVKFVEMDRVKEFQRCCGAGGGVKAGIPDLALGVAESRVKDAVATDADILSSCCPFCKRNLMDGRDSLKVDMVVEDVIELVAEALGLETK</sequence>
<feature type="chain" id="PRO_0000150081" description="Dihydromethanophenazine:CoB--CoM heterodisulfide reductase subunit D">
    <location>
        <begin position="1"/>
        <end position="409"/>
    </location>
</feature>
<feature type="domain" description="4Fe-4S ferredoxin-type 1" evidence="2">
    <location>
        <begin position="14"/>
        <end position="44"/>
    </location>
</feature>
<feature type="domain" description="4Fe-4S ferredoxin-type 2" evidence="2">
    <location>
        <begin position="81"/>
        <end position="110"/>
    </location>
</feature>
<feature type="binding site" evidence="2">
    <location>
        <position position="24"/>
    </location>
    <ligand>
        <name>[4Fe-4S] cluster</name>
        <dbReference type="ChEBI" id="CHEBI:49883"/>
        <label>1</label>
    </ligand>
</feature>
<feature type="binding site" evidence="2">
    <location>
        <position position="27"/>
    </location>
    <ligand>
        <name>[4Fe-4S] cluster</name>
        <dbReference type="ChEBI" id="CHEBI:49883"/>
        <label>1</label>
    </ligand>
</feature>
<feature type="binding site" evidence="2">
    <location>
        <position position="30"/>
    </location>
    <ligand>
        <name>[4Fe-4S] cluster</name>
        <dbReference type="ChEBI" id="CHEBI:49883"/>
        <label>1</label>
    </ligand>
</feature>
<feature type="binding site" evidence="2">
    <location>
        <position position="34"/>
    </location>
    <ligand>
        <name>[4Fe-4S] cluster</name>
        <dbReference type="ChEBI" id="CHEBI:49883"/>
        <label>2</label>
    </ligand>
</feature>
<feature type="binding site" evidence="2">
    <location>
        <position position="90"/>
    </location>
    <ligand>
        <name>[4Fe-4S] cluster</name>
        <dbReference type="ChEBI" id="CHEBI:49883"/>
        <label>2</label>
    </ligand>
</feature>
<feature type="binding site" evidence="2">
    <location>
        <position position="93"/>
    </location>
    <ligand>
        <name>[4Fe-4S] cluster</name>
        <dbReference type="ChEBI" id="CHEBI:49883"/>
        <label>2</label>
    </ligand>
</feature>
<feature type="binding site" evidence="2">
    <location>
        <position position="96"/>
    </location>
    <ligand>
        <name>[4Fe-4S] cluster</name>
        <dbReference type="ChEBI" id="CHEBI:49883"/>
        <label>2</label>
    </ligand>
</feature>
<feature type="binding site" evidence="2">
    <location>
        <position position="100"/>
    </location>
    <ligand>
        <name>[4Fe-4S] cluster</name>
        <dbReference type="ChEBI" id="CHEBI:49883"/>
        <label>1</label>
    </ligand>
</feature>
<proteinExistence type="evidence at protein level"/>
<organism>
    <name type="scientific">Methanosarcina mazei (strain ATCC BAA-159 / DSM 3647 / Goe1 / Go1 / JCM 11833 / OCM 88)</name>
    <name type="common">Methanosarcina frisia</name>
    <dbReference type="NCBI Taxonomy" id="192952"/>
    <lineage>
        <taxon>Archaea</taxon>
        <taxon>Methanobacteriati</taxon>
        <taxon>Methanobacteriota</taxon>
        <taxon>Stenosarchaea group</taxon>
        <taxon>Methanomicrobia</taxon>
        <taxon>Methanosarcinales</taxon>
        <taxon>Methanosarcinaceae</taxon>
        <taxon>Methanosarcina</taxon>
    </lineage>
</organism>
<name>HDRD_METMA</name>